<comment type="function">
    <text evidence="1">F-box-like protein which is required for entry into mitosis. Acts by participating in E3 ligase complexes that mediate the ubiquitination and degradation of WEE1 kinase at G2/M phase (By similarity).</text>
</comment>
<comment type="pathway">
    <text>Protein modification; protein ubiquitination.</text>
</comment>
<comment type="subunit">
    <text evidence="1">Interacts with SKP1. Part of a SCF (SKP1-cullin-F-box) protein ligase complex (By similarity).</text>
</comment>
<comment type="subcellular location">
    <subcellularLocation>
        <location evidence="1">Cytoplasm</location>
        <location evidence="1">Cytosol</location>
    </subcellularLocation>
</comment>
<comment type="domain">
    <text evidence="1">The KEN box is required for the association with the APC/C-Cdh1 complex.</text>
</comment>
<comment type="PTM">
    <text evidence="1">Ubiquitinated and degraded by the APC/C-Cdh1 complex.</text>
</comment>
<feature type="chain" id="PRO_0000287710" description="Cell division cycle-associated protein 3">
    <location>
        <begin position="1"/>
        <end position="273"/>
    </location>
</feature>
<feature type="region of interest" description="Disordered" evidence="4">
    <location>
        <begin position="1"/>
        <end position="231"/>
    </location>
</feature>
<feature type="region of interest" description="F-box-like">
    <location>
        <begin position="90"/>
        <end position="124"/>
    </location>
</feature>
<feature type="region of interest" description="Disordered" evidence="4">
    <location>
        <begin position="251"/>
        <end position="273"/>
    </location>
</feature>
<feature type="short sequence motif" description="KEN box">
    <location>
        <begin position="263"/>
        <end position="265"/>
    </location>
</feature>
<feature type="compositionally biased region" description="Polar residues" evidence="4">
    <location>
        <begin position="32"/>
        <end position="45"/>
    </location>
</feature>
<feature type="compositionally biased region" description="Acidic residues" evidence="4">
    <location>
        <begin position="94"/>
        <end position="105"/>
    </location>
</feature>
<feature type="compositionally biased region" description="Polar residues" evidence="4">
    <location>
        <begin position="144"/>
        <end position="154"/>
    </location>
</feature>
<feature type="compositionally biased region" description="Polar residues" evidence="4">
    <location>
        <begin position="164"/>
        <end position="175"/>
    </location>
</feature>
<feature type="compositionally biased region" description="Polar residues" evidence="4">
    <location>
        <begin position="210"/>
        <end position="220"/>
    </location>
</feature>
<feature type="modified residue" description="Phosphoserine" evidence="2">
    <location>
        <position position="29"/>
    </location>
</feature>
<feature type="modified residue" description="Phosphoserine" evidence="2">
    <location>
        <position position="31"/>
    </location>
</feature>
<feature type="modified residue" description="Phosphothreonine" evidence="2">
    <location>
        <position position="37"/>
    </location>
</feature>
<feature type="modified residue" description="Phosphoserine" evidence="2">
    <location>
        <position position="44"/>
    </location>
</feature>
<feature type="modified residue" description="Phosphoserine" evidence="2">
    <location>
        <position position="67"/>
    </location>
</feature>
<feature type="modified residue" description="Phosphothreonine" evidence="2">
    <location>
        <position position="75"/>
    </location>
</feature>
<feature type="modified residue" description="Phosphoserine" evidence="2">
    <location>
        <position position="93"/>
    </location>
</feature>
<feature type="modified residue" description="Phosphoserine" evidence="2">
    <location>
        <position position="204"/>
    </location>
</feature>
<feature type="modified residue" description="Phosphothreonine" evidence="2">
    <location>
        <position position="207"/>
    </location>
</feature>
<feature type="modified residue" description="Phosphoserine" evidence="5">
    <location>
        <position position="214"/>
    </location>
</feature>
<feature type="modified residue" description="Phosphothreonine" evidence="3">
    <location>
        <position position="217"/>
    </location>
</feature>
<reference key="1">
    <citation type="journal article" date="2004" name="Genome Res.">
        <title>The status, quality, and expansion of the NIH full-length cDNA project: the Mammalian Gene Collection (MGC).</title>
        <authorList>
            <consortium name="The MGC Project Team"/>
        </authorList>
    </citation>
    <scope>NUCLEOTIDE SEQUENCE [LARGE SCALE MRNA]</scope>
    <source>
        <tissue>Testis</tissue>
    </source>
</reference>
<reference key="2">
    <citation type="journal article" date="2012" name="Nat. Commun.">
        <title>Quantitative maps of protein phosphorylation sites across 14 different rat organs and tissues.</title>
        <authorList>
            <person name="Lundby A."/>
            <person name="Secher A."/>
            <person name="Lage K."/>
            <person name="Nordsborg N.B."/>
            <person name="Dmytriyev A."/>
            <person name="Lundby C."/>
            <person name="Olsen J.V."/>
        </authorList>
    </citation>
    <scope>PHOSPHORYLATION [LARGE SCALE ANALYSIS] AT SER-214</scope>
    <scope>IDENTIFICATION BY MASS SPECTROMETRY [LARGE SCALE ANALYSIS]</scope>
</reference>
<accession>Q68FW2</accession>
<sequence length="273" mass="29611">MGSTQSVSGTPARPLPRNKHVSRVADPRSPSAGIQRTPIQVESSPQPNPPAEQLNSLKQAQDPDPRSPTLGIARTPMKISGPDSQCPLVKELSEVFETEVSETEVSESISSPVLGLPQETPLSSELDLPPDPDPQVSLEDQLLPWSQTELNSKQVFAKEEAKQSTETMVSGQTSDKPSRDPETPQSSGSKRSRRKTNNKVLGRSPLTILQDDNSPGTLTLRQGKRPSALSENVKDLKEGVILGTGRFLKAGGGAWEQNEDHDKENQHFALMES</sequence>
<name>CDCA3_RAT</name>
<protein>
    <recommendedName>
        <fullName>Cell division cycle-associated protein 3</fullName>
    </recommendedName>
    <alternativeName>
        <fullName>Trigger of mitotic entry protein 1</fullName>
        <shortName>TOME-1</shortName>
    </alternativeName>
</protein>
<gene>
    <name type="primary">Cdca3</name>
    <name type="synonym">Tome1</name>
</gene>
<proteinExistence type="evidence at protein level"/>
<keyword id="KW-0131">Cell cycle</keyword>
<keyword id="KW-0132">Cell division</keyword>
<keyword id="KW-0963">Cytoplasm</keyword>
<keyword id="KW-0498">Mitosis</keyword>
<keyword id="KW-0597">Phosphoprotein</keyword>
<keyword id="KW-1185">Reference proteome</keyword>
<keyword id="KW-0832">Ubl conjugation</keyword>
<keyword id="KW-0833">Ubl conjugation pathway</keyword>
<evidence type="ECO:0000250" key="1"/>
<evidence type="ECO:0000250" key="2">
    <source>
        <dbReference type="UniProtKB" id="Q99618"/>
    </source>
</evidence>
<evidence type="ECO:0000250" key="3">
    <source>
        <dbReference type="UniProtKB" id="Q99M54"/>
    </source>
</evidence>
<evidence type="ECO:0000256" key="4">
    <source>
        <dbReference type="SAM" id="MobiDB-lite"/>
    </source>
</evidence>
<evidence type="ECO:0007744" key="5">
    <source>
    </source>
</evidence>
<organism>
    <name type="scientific">Rattus norvegicus</name>
    <name type="common">Rat</name>
    <dbReference type="NCBI Taxonomy" id="10116"/>
    <lineage>
        <taxon>Eukaryota</taxon>
        <taxon>Metazoa</taxon>
        <taxon>Chordata</taxon>
        <taxon>Craniata</taxon>
        <taxon>Vertebrata</taxon>
        <taxon>Euteleostomi</taxon>
        <taxon>Mammalia</taxon>
        <taxon>Eutheria</taxon>
        <taxon>Euarchontoglires</taxon>
        <taxon>Glires</taxon>
        <taxon>Rodentia</taxon>
        <taxon>Myomorpha</taxon>
        <taxon>Muroidea</taxon>
        <taxon>Muridae</taxon>
        <taxon>Murinae</taxon>
        <taxon>Rattus</taxon>
    </lineage>
</organism>
<dbReference type="EMBL" id="BC079204">
    <property type="protein sequence ID" value="AAH79204.1"/>
    <property type="molecule type" value="mRNA"/>
</dbReference>
<dbReference type="RefSeq" id="NP_001007649.1">
    <property type="nucleotide sequence ID" value="NM_001007648.1"/>
</dbReference>
<dbReference type="RefSeq" id="XP_006237403.1">
    <property type="nucleotide sequence ID" value="XM_006237341.4"/>
</dbReference>
<dbReference type="RefSeq" id="XP_017448079.1">
    <property type="nucleotide sequence ID" value="XM_017592590.1"/>
</dbReference>
<dbReference type="FunCoup" id="Q68FW2">
    <property type="interactions" value="440"/>
</dbReference>
<dbReference type="STRING" id="10116.ENSRNOP00000020803"/>
<dbReference type="iPTMnet" id="Q68FW2"/>
<dbReference type="PhosphoSitePlus" id="Q68FW2"/>
<dbReference type="PaxDb" id="10116-ENSRNOP00000020803"/>
<dbReference type="Ensembl" id="ENSRNOT00000020803.5">
    <property type="protein sequence ID" value="ENSRNOP00000020803.4"/>
    <property type="gene ID" value="ENSRNOG00000015529.5"/>
</dbReference>
<dbReference type="GeneID" id="297594"/>
<dbReference type="KEGG" id="rno:297594"/>
<dbReference type="UCSC" id="RGD:1359093">
    <property type="organism name" value="rat"/>
</dbReference>
<dbReference type="AGR" id="RGD:1359093"/>
<dbReference type="CTD" id="83461"/>
<dbReference type="RGD" id="1359093">
    <property type="gene designation" value="Cdca3"/>
</dbReference>
<dbReference type="eggNOG" id="ENOG502S7V2">
    <property type="taxonomic scope" value="Eukaryota"/>
</dbReference>
<dbReference type="GeneTree" id="ENSGT00390000017343"/>
<dbReference type="HOGENOM" id="CLU_091723_0_0_1"/>
<dbReference type="InParanoid" id="Q68FW2"/>
<dbReference type="OMA" id="KITGRAW"/>
<dbReference type="OrthoDB" id="6337960at2759"/>
<dbReference type="PhylomeDB" id="Q68FW2"/>
<dbReference type="TreeFam" id="TF101068"/>
<dbReference type="UniPathway" id="UPA00143"/>
<dbReference type="PRO" id="PR:Q68FW2"/>
<dbReference type="Proteomes" id="UP000002494">
    <property type="component" value="Chromosome 4"/>
</dbReference>
<dbReference type="Bgee" id="ENSRNOG00000015529">
    <property type="expression patterns" value="Expressed in testis and 17 other cell types or tissues"/>
</dbReference>
<dbReference type="GO" id="GO:0005912">
    <property type="term" value="C:adherens junction"/>
    <property type="evidence" value="ECO:0000266"/>
    <property type="project" value="RGD"/>
</dbReference>
<dbReference type="GO" id="GO:0005829">
    <property type="term" value="C:cytosol"/>
    <property type="evidence" value="ECO:0007669"/>
    <property type="project" value="UniProtKB-SubCell"/>
</dbReference>
<dbReference type="GO" id="GO:0051301">
    <property type="term" value="P:cell division"/>
    <property type="evidence" value="ECO:0007669"/>
    <property type="project" value="UniProtKB-KW"/>
</dbReference>
<dbReference type="GO" id="GO:0016567">
    <property type="term" value="P:protein ubiquitination"/>
    <property type="evidence" value="ECO:0007669"/>
    <property type="project" value="UniProtKB-UniPathway"/>
</dbReference>
<dbReference type="InterPro" id="IPR038832">
    <property type="entry name" value="CDCA3"/>
</dbReference>
<dbReference type="PANTHER" id="PTHR34756">
    <property type="entry name" value="CELL DIVISION CYCLE-ASSOCIATED PROTEIN 3"/>
    <property type="match status" value="1"/>
</dbReference>
<dbReference type="PANTHER" id="PTHR34756:SF1">
    <property type="entry name" value="CELL DIVISION CYCLE-ASSOCIATED PROTEIN 3"/>
    <property type="match status" value="1"/>
</dbReference>